<keyword id="KW-0687">Ribonucleoprotein</keyword>
<keyword id="KW-0689">Ribosomal protein</keyword>
<keyword id="KW-0694">RNA-binding</keyword>
<keyword id="KW-0699">rRNA-binding</keyword>
<reference key="1">
    <citation type="journal article" date="2011" name="J. Bacteriol.">
        <title>Comparative genomics of 28 Salmonella enterica isolates: evidence for CRISPR-mediated adaptive sublineage evolution.</title>
        <authorList>
            <person name="Fricke W.F."/>
            <person name="Mammel M.K."/>
            <person name="McDermott P.F."/>
            <person name="Tartera C."/>
            <person name="White D.G."/>
            <person name="Leclerc J.E."/>
            <person name="Ravel J."/>
            <person name="Cebula T.A."/>
        </authorList>
    </citation>
    <scope>NUCLEOTIDE SEQUENCE [LARGE SCALE GENOMIC DNA]</scope>
    <source>
        <strain>CT_02021853</strain>
    </source>
</reference>
<organism>
    <name type="scientific">Salmonella dublin (strain CT_02021853)</name>
    <dbReference type="NCBI Taxonomy" id="439851"/>
    <lineage>
        <taxon>Bacteria</taxon>
        <taxon>Pseudomonadati</taxon>
        <taxon>Pseudomonadota</taxon>
        <taxon>Gammaproteobacteria</taxon>
        <taxon>Enterobacterales</taxon>
        <taxon>Enterobacteriaceae</taxon>
        <taxon>Salmonella</taxon>
    </lineage>
</organism>
<proteinExistence type="inferred from homology"/>
<comment type="function">
    <text evidence="1">Binds to 23S rRNA. Forms part of two intersubunit bridges in the 70S ribosome.</text>
</comment>
<comment type="subunit">
    <text evidence="1">Part of the 50S ribosomal subunit. Forms a cluster with proteins L3 and L19. In the 70S ribosome, L14 and L19 interact and together make contacts with the 16S rRNA in bridges B5 and B8.</text>
</comment>
<comment type="similarity">
    <text evidence="1">Belongs to the universal ribosomal protein uL14 family.</text>
</comment>
<protein>
    <recommendedName>
        <fullName evidence="1">Large ribosomal subunit protein uL14</fullName>
    </recommendedName>
    <alternativeName>
        <fullName evidence="2">50S ribosomal protein L14</fullName>
    </alternativeName>
</protein>
<name>RL14_SALDC</name>
<accession>B5FJK4</accession>
<evidence type="ECO:0000255" key="1">
    <source>
        <dbReference type="HAMAP-Rule" id="MF_01367"/>
    </source>
</evidence>
<evidence type="ECO:0000305" key="2"/>
<dbReference type="EMBL" id="CP001144">
    <property type="protein sequence ID" value="ACH76741.1"/>
    <property type="molecule type" value="Genomic_DNA"/>
</dbReference>
<dbReference type="RefSeq" id="WP_000613954.1">
    <property type="nucleotide sequence ID" value="NC_011205.1"/>
</dbReference>
<dbReference type="SMR" id="B5FJK4"/>
<dbReference type="GeneID" id="98390432"/>
<dbReference type="KEGG" id="sed:SeD_A3797"/>
<dbReference type="HOGENOM" id="CLU_095071_2_1_6"/>
<dbReference type="Proteomes" id="UP000008322">
    <property type="component" value="Chromosome"/>
</dbReference>
<dbReference type="GO" id="GO:0022625">
    <property type="term" value="C:cytosolic large ribosomal subunit"/>
    <property type="evidence" value="ECO:0007669"/>
    <property type="project" value="TreeGrafter"/>
</dbReference>
<dbReference type="GO" id="GO:0070180">
    <property type="term" value="F:large ribosomal subunit rRNA binding"/>
    <property type="evidence" value="ECO:0007669"/>
    <property type="project" value="TreeGrafter"/>
</dbReference>
<dbReference type="GO" id="GO:0003735">
    <property type="term" value="F:structural constituent of ribosome"/>
    <property type="evidence" value="ECO:0007669"/>
    <property type="project" value="InterPro"/>
</dbReference>
<dbReference type="GO" id="GO:0006412">
    <property type="term" value="P:translation"/>
    <property type="evidence" value="ECO:0007669"/>
    <property type="project" value="UniProtKB-UniRule"/>
</dbReference>
<dbReference type="CDD" id="cd00337">
    <property type="entry name" value="Ribosomal_uL14"/>
    <property type="match status" value="1"/>
</dbReference>
<dbReference type="FunFam" id="2.40.150.20:FF:000001">
    <property type="entry name" value="50S ribosomal protein L14"/>
    <property type="match status" value="1"/>
</dbReference>
<dbReference type="Gene3D" id="2.40.150.20">
    <property type="entry name" value="Ribosomal protein L14"/>
    <property type="match status" value="1"/>
</dbReference>
<dbReference type="HAMAP" id="MF_01367">
    <property type="entry name" value="Ribosomal_uL14"/>
    <property type="match status" value="1"/>
</dbReference>
<dbReference type="InterPro" id="IPR000218">
    <property type="entry name" value="Ribosomal_uL14"/>
</dbReference>
<dbReference type="InterPro" id="IPR005745">
    <property type="entry name" value="Ribosomal_uL14_bac-type"/>
</dbReference>
<dbReference type="InterPro" id="IPR019972">
    <property type="entry name" value="Ribosomal_uL14_CS"/>
</dbReference>
<dbReference type="InterPro" id="IPR036853">
    <property type="entry name" value="Ribosomal_uL14_sf"/>
</dbReference>
<dbReference type="NCBIfam" id="TIGR01067">
    <property type="entry name" value="rplN_bact"/>
    <property type="match status" value="1"/>
</dbReference>
<dbReference type="PANTHER" id="PTHR11761">
    <property type="entry name" value="50S/60S RIBOSOMAL PROTEIN L14/L23"/>
    <property type="match status" value="1"/>
</dbReference>
<dbReference type="PANTHER" id="PTHR11761:SF3">
    <property type="entry name" value="LARGE RIBOSOMAL SUBUNIT PROTEIN UL14M"/>
    <property type="match status" value="1"/>
</dbReference>
<dbReference type="Pfam" id="PF00238">
    <property type="entry name" value="Ribosomal_L14"/>
    <property type="match status" value="1"/>
</dbReference>
<dbReference type="SMART" id="SM01374">
    <property type="entry name" value="Ribosomal_L14"/>
    <property type="match status" value="1"/>
</dbReference>
<dbReference type="SUPFAM" id="SSF50193">
    <property type="entry name" value="Ribosomal protein L14"/>
    <property type="match status" value="1"/>
</dbReference>
<dbReference type="PROSITE" id="PS00049">
    <property type="entry name" value="RIBOSOMAL_L14"/>
    <property type="match status" value="1"/>
</dbReference>
<gene>
    <name evidence="1" type="primary">rplN</name>
    <name type="ordered locus">SeD_A3797</name>
</gene>
<feature type="chain" id="PRO_1000144322" description="Large ribosomal subunit protein uL14">
    <location>
        <begin position="1"/>
        <end position="123"/>
    </location>
</feature>
<sequence>MIQEQTMLNVADNSGARRVMCIKVLGGSHRRYAGVGDIIKITIKEAIPRGKVKKGDVLKAVVVRTKKGVRRPDGSVIRFDGNACVILNNNSEQPIGTRIFGPVTRELRNEKFMKIISLAPEVL</sequence>